<evidence type="ECO:0000250" key="1"/>
<evidence type="ECO:0000255" key="2">
    <source>
        <dbReference type="PROSITE-ProRule" id="PRU01133"/>
    </source>
</evidence>
<keyword id="KW-0106">Calcium</keyword>
<keyword id="KW-0963">Cytoplasm</keyword>
<keyword id="KW-1185">Reference proteome</keyword>
<dbReference type="EMBL" id="U80971">
    <property type="protein sequence ID" value="AAC47622.1"/>
    <property type="molecule type" value="mRNA"/>
</dbReference>
<dbReference type="SMR" id="P90697"/>
<dbReference type="FunCoup" id="P90697">
    <property type="interactions" value="1409"/>
</dbReference>
<dbReference type="STRING" id="6279.P90697"/>
<dbReference type="InParanoid" id="P90697"/>
<dbReference type="Proteomes" id="UP000006672">
    <property type="component" value="Unassembled WGS sequence"/>
</dbReference>
<dbReference type="GO" id="GO:0005737">
    <property type="term" value="C:cytoplasm"/>
    <property type="evidence" value="ECO:0007669"/>
    <property type="project" value="UniProtKB-SubCell"/>
</dbReference>
<dbReference type="GO" id="GO:0005509">
    <property type="term" value="F:calcium ion binding"/>
    <property type="evidence" value="ECO:0007669"/>
    <property type="project" value="TreeGrafter"/>
</dbReference>
<dbReference type="FunFam" id="2.170.150.10:FF:000010">
    <property type="entry name" value="Translationally-controlled tumor protein homolog"/>
    <property type="match status" value="1"/>
</dbReference>
<dbReference type="Gene3D" id="2.170.150.10">
    <property type="entry name" value="Metal Binding Protein, Guanine Nucleotide Exchange Factor, Chain A"/>
    <property type="match status" value="1"/>
</dbReference>
<dbReference type="InterPro" id="IPR011057">
    <property type="entry name" value="Mss4-like_sf"/>
</dbReference>
<dbReference type="InterPro" id="IPR011323">
    <property type="entry name" value="Mss4/transl-control_tumour"/>
</dbReference>
<dbReference type="InterPro" id="IPR034737">
    <property type="entry name" value="TCTP"/>
</dbReference>
<dbReference type="InterPro" id="IPR018103">
    <property type="entry name" value="Translation_control_tumour_CS"/>
</dbReference>
<dbReference type="InterPro" id="IPR018105">
    <property type="entry name" value="Translational_control_tumour_p"/>
</dbReference>
<dbReference type="PANTHER" id="PTHR11991">
    <property type="entry name" value="TRANSLATIONALLY CONTROLLED TUMOR PROTEIN-RELATED"/>
    <property type="match status" value="1"/>
</dbReference>
<dbReference type="PANTHER" id="PTHR11991:SF0">
    <property type="entry name" value="TRANSLATIONALLY-CONTROLLED TUMOR PROTEIN"/>
    <property type="match status" value="1"/>
</dbReference>
<dbReference type="Pfam" id="PF00838">
    <property type="entry name" value="TCTP"/>
    <property type="match status" value="1"/>
</dbReference>
<dbReference type="PRINTS" id="PR01653">
    <property type="entry name" value="TCTPROTEIN"/>
</dbReference>
<dbReference type="SUPFAM" id="SSF51316">
    <property type="entry name" value="Mss4-like"/>
    <property type="match status" value="1"/>
</dbReference>
<dbReference type="PROSITE" id="PS01002">
    <property type="entry name" value="TCTP_1"/>
    <property type="match status" value="1"/>
</dbReference>
<dbReference type="PROSITE" id="PS01003">
    <property type="entry name" value="TCTP_2"/>
    <property type="match status" value="1"/>
</dbReference>
<dbReference type="PROSITE" id="PS51797">
    <property type="entry name" value="TCTP_3"/>
    <property type="match status" value="1"/>
</dbReference>
<sequence length="181" mass="20764">MLIFKDAFTDDELASDSFPMKLVDGLIWEFKGRQVVRREGEIQLAGANPSAEGEDGDEGSEECVERGIDFVLNHRLQEMNCYEDLVTFKSYCKSFMKKVVELMQKNGKSEAEISEFKRKIPAWVVSLLSKDRFKQLQFFIGERMAEGQGEGQVAVVEYRDEEDGEVPYLMLVKEALIEEKQ</sequence>
<reference key="1">
    <citation type="journal article" date="1997" name="Mol. Biochem. Parasitol.">
        <title>Differentially expressed, abundant trans-spliced cDNAs from larval Brugia malayi.</title>
        <authorList>
            <person name="Gregory W.F."/>
            <person name="Blaxter M.L."/>
            <person name="Maizels R.M."/>
        </authorList>
    </citation>
    <scope>NUCLEOTIDE SEQUENCE [MRNA]</scope>
</reference>
<feature type="chain" id="PRO_0000211280" description="Translationally-controlled tumor protein homolog">
    <location>
        <begin position="1"/>
        <end position="181"/>
    </location>
</feature>
<feature type="domain" description="TCTP" evidence="2">
    <location>
        <begin position="1"/>
        <end position="181"/>
    </location>
</feature>
<organism>
    <name type="scientific">Brugia malayi</name>
    <name type="common">Filarial nematode worm</name>
    <dbReference type="NCBI Taxonomy" id="6279"/>
    <lineage>
        <taxon>Eukaryota</taxon>
        <taxon>Metazoa</taxon>
        <taxon>Ecdysozoa</taxon>
        <taxon>Nematoda</taxon>
        <taxon>Chromadorea</taxon>
        <taxon>Rhabditida</taxon>
        <taxon>Spirurina</taxon>
        <taxon>Spiruromorpha</taxon>
        <taxon>Filarioidea</taxon>
        <taxon>Onchocercidae</taxon>
        <taxon>Brugia</taxon>
    </lineage>
</organism>
<protein>
    <recommendedName>
        <fullName>Translationally-controlled tumor protein homolog</fullName>
        <shortName>TCTP</shortName>
    </recommendedName>
    <alternativeName>
        <fullName>TPH-1</fullName>
    </alternativeName>
</protein>
<accession>P90697</accession>
<proteinExistence type="evidence at transcript level"/>
<name>TCTP_BRUMA</name>
<comment type="function">
    <text evidence="1">Involved in calcium binding and microtubule stabilization.</text>
</comment>
<comment type="subcellular location">
    <subcellularLocation>
        <location evidence="1">Cytoplasm</location>
    </subcellularLocation>
</comment>
<comment type="similarity">
    <text evidence="2">Belongs to the TCTP family.</text>
</comment>